<accession>A5GMY0</accession>
<protein>
    <recommendedName>
        <fullName evidence="1">Protoheme IX farnesyltransferase</fullName>
        <ecNumber evidence="1">2.5.1.141</ecNumber>
    </recommendedName>
    <alternativeName>
        <fullName evidence="1">Heme B farnesyltransferase</fullName>
    </alternativeName>
    <alternativeName>
        <fullName evidence="1">Heme O synthase</fullName>
    </alternativeName>
</protein>
<proteinExistence type="inferred from homology"/>
<feature type="chain" id="PRO_0000327180" description="Protoheme IX farnesyltransferase">
    <location>
        <begin position="1"/>
        <end position="333"/>
    </location>
</feature>
<feature type="transmembrane region" description="Helical" evidence="1">
    <location>
        <begin position="36"/>
        <end position="56"/>
    </location>
</feature>
<feature type="transmembrane region" description="Helical" evidence="1">
    <location>
        <begin position="61"/>
        <end position="81"/>
    </location>
</feature>
<feature type="transmembrane region" description="Helical" evidence="1">
    <location>
        <begin position="107"/>
        <end position="127"/>
    </location>
</feature>
<feature type="transmembrane region" description="Helical" evidence="1">
    <location>
        <begin position="130"/>
        <end position="150"/>
    </location>
</feature>
<feature type="transmembrane region" description="Helical" evidence="1">
    <location>
        <begin position="158"/>
        <end position="178"/>
    </location>
</feature>
<feature type="transmembrane region" description="Helical" evidence="1">
    <location>
        <begin position="186"/>
        <end position="206"/>
    </location>
</feature>
<feature type="transmembrane region" description="Helical" evidence="1">
    <location>
        <begin position="243"/>
        <end position="263"/>
    </location>
</feature>
<feature type="transmembrane region" description="Helical" evidence="1">
    <location>
        <begin position="284"/>
        <end position="304"/>
    </location>
</feature>
<gene>
    <name evidence="1" type="primary">ctaB</name>
    <name type="ordered locus">SynWH7803_1869</name>
</gene>
<comment type="function">
    <text evidence="1">Converts heme B (protoheme IX) to heme O by substitution of the vinyl group on carbon 2 of heme B porphyrin ring with a hydroxyethyl farnesyl side group.</text>
</comment>
<comment type="catalytic activity">
    <reaction evidence="1">
        <text>heme b + (2E,6E)-farnesyl diphosphate + H2O = Fe(II)-heme o + diphosphate</text>
        <dbReference type="Rhea" id="RHEA:28070"/>
        <dbReference type="ChEBI" id="CHEBI:15377"/>
        <dbReference type="ChEBI" id="CHEBI:33019"/>
        <dbReference type="ChEBI" id="CHEBI:60344"/>
        <dbReference type="ChEBI" id="CHEBI:60530"/>
        <dbReference type="ChEBI" id="CHEBI:175763"/>
        <dbReference type="EC" id="2.5.1.141"/>
    </reaction>
</comment>
<comment type="pathway">
    <text evidence="1">Porphyrin-containing compound metabolism; heme O biosynthesis; heme O from protoheme: step 1/1.</text>
</comment>
<comment type="subcellular location">
    <subcellularLocation>
        <location evidence="1">Cell inner membrane</location>
        <topology evidence="1">Multi-pass membrane protein</topology>
    </subcellularLocation>
</comment>
<comment type="miscellaneous">
    <text evidence="1">Carbon 2 of the heme B porphyrin ring is defined according to the Fischer nomenclature.</text>
</comment>
<comment type="similarity">
    <text evidence="1">Belongs to the UbiA prenyltransferase family. Protoheme IX farnesyltransferase subfamily.</text>
</comment>
<reference key="1">
    <citation type="submission" date="2006-05" db="EMBL/GenBank/DDBJ databases">
        <authorList>
            <consortium name="Genoscope"/>
        </authorList>
    </citation>
    <scope>NUCLEOTIDE SEQUENCE [LARGE SCALE GENOMIC DNA]</scope>
    <source>
        <strain>WH7803</strain>
    </source>
</reference>
<sequence length="333" mass="34991">MASSSATAVPLTREQVVPSRQRIKLPAWLEVAKPRLIPLLLATTLGGMALTEGWPLSSPRLVCTLGGGALAAAAAGVLNCLWEQELDGRMQRTSGRALPSGRLSPTAAFAGAVSCALAAATLLVSGVNCLAAGLSLLGLCSYVLLYTALLKPRTTQNIVIGGVAGAIPPLVGAAAATGHVGLGGWWLFALVMVWTPAHFWALALLLRDDYRAVGIPMLPVVKGPVVTARAIRRYGWATVLLSFLGVWALPEGGLLYGLLLLPFNGRLLQMVERLGAEPDSTERAKGLFRWSILYLFGICLLLVFSRQSGAAVFDLQLRGWLAALPAGLPGINA</sequence>
<keyword id="KW-0997">Cell inner membrane</keyword>
<keyword id="KW-1003">Cell membrane</keyword>
<keyword id="KW-0350">Heme biosynthesis</keyword>
<keyword id="KW-0472">Membrane</keyword>
<keyword id="KW-1185">Reference proteome</keyword>
<keyword id="KW-0808">Transferase</keyword>
<keyword id="KW-0812">Transmembrane</keyword>
<keyword id="KW-1133">Transmembrane helix</keyword>
<name>COXX_SYNPW</name>
<organism>
    <name type="scientific">Synechococcus sp. (strain WH7803)</name>
    <dbReference type="NCBI Taxonomy" id="32051"/>
    <lineage>
        <taxon>Bacteria</taxon>
        <taxon>Bacillati</taxon>
        <taxon>Cyanobacteriota</taxon>
        <taxon>Cyanophyceae</taxon>
        <taxon>Synechococcales</taxon>
        <taxon>Synechococcaceae</taxon>
        <taxon>Synechococcus</taxon>
    </lineage>
</organism>
<dbReference type="EC" id="2.5.1.141" evidence="1"/>
<dbReference type="EMBL" id="CT971583">
    <property type="protein sequence ID" value="CAK24295.1"/>
    <property type="molecule type" value="Genomic_DNA"/>
</dbReference>
<dbReference type="SMR" id="A5GMY0"/>
<dbReference type="STRING" id="32051.SynWH7803_1869"/>
<dbReference type="KEGG" id="syx:SynWH7803_1869"/>
<dbReference type="eggNOG" id="COG0109">
    <property type="taxonomic scope" value="Bacteria"/>
</dbReference>
<dbReference type="HOGENOM" id="CLU_029631_0_2_3"/>
<dbReference type="OrthoDB" id="9814417at2"/>
<dbReference type="UniPathway" id="UPA00834">
    <property type="reaction ID" value="UER00712"/>
</dbReference>
<dbReference type="Proteomes" id="UP000001566">
    <property type="component" value="Chromosome"/>
</dbReference>
<dbReference type="GO" id="GO:0005886">
    <property type="term" value="C:plasma membrane"/>
    <property type="evidence" value="ECO:0007669"/>
    <property type="project" value="UniProtKB-SubCell"/>
</dbReference>
<dbReference type="GO" id="GO:0008495">
    <property type="term" value="F:protoheme IX farnesyltransferase activity"/>
    <property type="evidence" value="ECO:0007669"/>
    <property type="project" value="UniProtKB-UniRule"/>
</dbReference>
<dbReference type="GO" id="GO:0048034">
    <property type="term" value="P:heme O biosynthetic process"/>
    <property type="evidence" value="ECO:0007669"/>
    <property type="project" value="UniProtKB-UniRule"/>
</dbReference>
<dbReference type="CDD" id="cd13957">
    <property type="entry name" value="PT_UbiA_Cox10"/>
    <property type="match status" value="1"/>
</dbReference>
<dbReference type="Gene3D" id="1.10.357.140">
    <property type="entry name" value="UbiA prenyltransferase"/>
    <property type="match status" value="1"/>
</dbReference>
<dbReference type="HAMAP" id="MF_00154">
    <property type="entry name" value="CyoE_CtaB"/>
    <property type="match status" value="1"/>
</dbReference>
<dbReference type="InterPro" id="IPR006369">
    <property type="entry name" value="Protohaem_IX_farnesylTrfase"/>
</dbReference>
<dbReference type="InterPro" id="IPR000537">
    <property type="entry name" value="UbiA_prenyltransferase"/>
</dbReference>
<dbReference type="InterPro" id="IPR030470">
    <property type="entry name" value="UbiA_prenylTrfase_CS"/>
</dbReference>
<dbReference type="InterPro" id="IPR044878">
    <property type="entry name" value="UbiA_sf"/>
</dbReference>
<dbReference type="NCBIfam" id="TIGR01473">
    <property type="entry name" value="cyoE_ctaB"/>
    <property type="match status" value="1"/>
</dbReference>
<dbReference type="NCBIfam" id="NF003349">
    <property type="entry name" value="PRK04375.1-2"/>
    <property type="match status" value="1"/>
</dbReference>
<dbReference type="PANTHER" id="PTHR43448:SF7">
    <property type="entry name" value="4-HYDROXYBENZOATE SOLANESYLTRANSFERASE"/>
    <property type="match status" value="1"/>
</dbReference>
<dbReference type="PANTHER" id="PTHR43448">
    <property type="entry name" value="PROTOHEME IX FARNESYLTRANSFERASE, MITOCHONDRIAL"/>
    <property type="match status" value="1"/>
</dbReference>
<dbReference type="Pfam" id="PF01040">
    <property type="entry name" value="UbiA"/>
    <property type="match status" value="1"/>
</dbReference>
<dbReference type="PROSITE" id="PS00943">
    <property type="entry name" value="UBIA"/>
    <property type="match status" value="1"/>
</dbReference>
<evidence type="ECO:0000255" key="1">
    <source>
        <dbReference type="HAMAP-Rule" id="MF_00154"/>
    </source>
</evidence>